<protein>
    <recommendedName>
        <fullName evidence="3">Insulin-related peptide 1</fullName>
        <shortName evidence="3">IRP-1</shortName>
    </recommendedName>
    <component>
        <recommendedName>
            <fullName evidence="5">DAGWWIPQHGHHALAGVR-amide</fullName>
        </recommendedName>
    </component>
</protein>
<accession>C0HKS3</accession>
<reference evidence="4" key="1">
    <citation type="journal article" date="2018" name="J. Proteome Res.">
        <title>Mating-induced differential peptidomics of neuropeptides and protein hormones in Agrotis ipsilon moths.</title>
        <authorList>
            <person name="Diesner M."/>
            <person name="Gallot A."/>
            <person name="Binz H."/>
            <person name="Gaertner C."/>
            <person name="Vitecek S."/>
            <person name="Kahnt J."/>
            <person name="Schachtner J."/>
            <person name="Jacquin-Joly E."/>
            <person name="Gadenne C."/>
        </authorList>
    </citation>
    <scope>NUCLEOTIDE SEQUENCE [MRNA]</scope>
    <scope>PROTEIN SEQUENCE OF 47-64</scope>
    <scope>TISSUE SPECIFICITY</scope>
    <scope>MASS SPECTROMETRY</scope>
    <scope>IDENTIFICATION BY MASS SPECTROMETRY</scope>
    <scope>AMIDATION AT ARG-64</scope>
</reference>
<proteinExistence type="evidence at protein level"/>
<organism>
    <name type="scientific">Agrotis ipsilon</name>
    <name type="common">Black cutworm moth</name>
    <dbReference type="NCBI Taxonomy" id="56364"/>
    <lineage>
        <taxon>Eukaryota</taxon>
        <taxon>Metazoa</taxon>
        <taxon>Ecdysozoa</taxon>
        <taxon>Arthropoda</taxon>
        <taxon>Hexapoda</taxon>
        <taxon>Insecta</taxon>
        <taxon>Pterygota</taxon>
        <taxon>Neoptera</taxon>
        <taxon>Endopterygota</taxon>
        <taxon>Lepidoptera</taxon>
        <taxon>Glossata</taxon>
        <taxon>Ditrysia</taxon>
        <taxon>Noctuoidea</taxon>
        <taxon>Noctuidae</taxon>
        <taxon>Noctuinae</taxon>
        <taxon>Noctuini</taxon>
        <taxon>Agrotis</taxon>
    </lineage>
</organism>
<comment type="subcellular location">
    <subcellularLocation>
        <location evidence="4">Secreted</location>
    </subcellularLocation>
</comment>
<comment type="tissue specificity">
    <text evidence="2">DAGWWIPQHGHHALAGVR-amide: Expressed in corpora cardiaca (CC), corpora allata (CA), antennal lobe (AL) and gnathal ganglion (GNG) (at protein level). Expression in CC and CA detected in most animals, in AL and GNG in few animals (at protein level).</text>
</comment>
<comment type="mass spectrometry">
    <text>DAGWWIPQHGHHALAGVR-amide.</text>
</comment>
<comment type="similarity">
    <text evidence="4">Belongs to the insulin family.</text>
</comment>
<comment type="caution">
    <text evidence="4">Further mature peptides might exist.</text>
</comment>
<keyword id="KW-0027">Amidation</keyword>
<keyword id="KW-0165">Cleavage on pair of basic residues</keyword>
<keyword id="KW-0903">Direct protein sequencing</keyword>
<keyword id="KW-0527">Neuropeptide</keyword>
<keyword id="KW-0873">Pyrrolidone carboxylic acid</keyword>
<keyword id="KW-0964">Secreted</keyword>
<keyword id="KW-0732">Signal</keyword>
<evidence type="ECO:0000255" key="1"/>
<evidence type="ECO:0000269" key="2">
    <source>
    </source>
</evidence>
<evidence type="ECO:0000303" key="3">
    <source>
    </source>
</evidence>
<evidence type="ECO:0000305" key="4"/>
<evidence type="ECO:0000305" key="5">
    <source>
    </source>
</evidence>
<name>IRP1_AGRIP</name>
<feature type="signal peptide" evidence="1">
    <location>
        <begin position="1"/>
        <end position="19"/>
    </location>
</feature>
<feature type="propeptide" id="PRO_0000444517" evidence="5">
    <location>
        <begin position="20"/>
        <end position="44"/>
    </location>
</feature>
<feature type="peptide" id="PRO_0000444518" description="DAGWWIPQHGHHALAGVR-amide" evidence="2">
    <location>
        <begin position="47"/>
        <end position="64"/>
    </location>
</feature>
<feature type="propeptide" id="PRO_0000444519" evidence="5">
    <location>
        <begin position="68"/>
        <end position="87"/>
    </location>
</feature>
<feature type="modified residue" description="Arginine amide" evidence="2">
    <location>
        <position position="64"/>
    </location>
</feature>
<sequence>MKSFMVFVLIFACFSCYYAQESTNFYCGRTLSRALAVLCYGAESKRDAGWWIPQHGHHALAGVRGKRGPVDECCEKACSIQELMTYC</sequence>
<dbReference type="GO" id="GO:0005576">
    <property type="term" value="C:extracellular region"/>
    <property type="evidence" value="ECO:0007669"/>
    <property type="project" value="UniProtKB-SubCell"/>
</dbReference>
<dbReference type="GO" id="GO:0005179">
    <property type="term" value="F:hormone activity"/>
    <property type="evidence" value="ECO:0007669"/>
    <property type="project" value="InterPro"/>
</dbReference>
<dbReference type="GO" id="GO:0007218">
    <property type="term" value="P:neuropeptide signaling pathway"/>
    <property type="evidence" value="ECO:0007669"/>
    <property type="project" value="UniProtKB-KW"/>
</dbReference>
<dbReference type="CDD" id="cd04366">
    <property type="entry name" value="IlGF_insulin_bombyxin_like"/>
    <property type="match status" value="1"/>
</dbReference>
<dbReference type="Gene3D" id="1.10.100.10">
    <property type="entry name" value="Insulin-like"/>
    <property type="match status" value="1"/>
</dbReference>
<dbReference type="InterPro" id="IPR016179">
    <property type="entry name" value="Insulin-like"/>
</dbReference>
<dbReference type="InterPro" id="IPR036438">
    <property type="entry name" value="Insulin-like_sf"/>
</dbReference>
<dbReference type="InterPro" id="IPR022353">
    <property type="entry name" value="Insulin_CS"/>
</dbReference>
<dbReference type="InterPro" id="IPR022352">
    <property type="entry name" value="Insulin_family"/>
</dbReference>
<dbReference type="Pfam" id="PF00049">
    <property type="entry name" value="Insulin"/>
    <property type="match status" value="1"/>
</dbReference>
<dbReference type="PRINTS" id="PR00276">
    <property type="entry name" value="INSULINFAMLY"/>
</dbReference>
<dbReference type="SMART" id="SM00078">
    <property type="entry name" value="IlGF"/>
    <property type="match status" value="1"/>
</dbReference>
<dbReference type="SUPFAM" id="SSF56994">
    <property type="entry name" value="Insulin-like"/>
    <property type="match status" value="1"/>
</dbReference>
<dbReference type="PROSITE" id="PS00262">
    <property type="entry name" value="INSULIN"/>
    <property type="match status" value="1"/>
</dbReference>